<name>RHAB_SALPK</name>
<feature type="chain" id="PRO_1000146554" description="Rhamnulokinase">
    <location>
        <begin position="1"/>
        <end position="489"/>
    </location>
</feature>
<feature type="active site" description="Proton acceptor" evidence="1">
    <location>
        <position position="237"/>
    </location>
</feature>
<feature type="binding site" evidence="1">
    <location>
        <begin position="13"/>
        <end position="17"/>
    </location>
    <ligand>
        <name>ATP</name>
        <dbReference type="ChEBI" id="CHEBI:30616"/>
    </ligand>
</feature>
<feature type="binding site" evidence="1">
    <location>
        <position position="83"/>
    </location>
    <ligand>
        <name>substrate</name>
    </ligand>
</feature>
<feature type="binding site" evidence="1">
    <location>
        <begin position="236"/>
        <end position="238"/>
    </location>
    <ligand>
        <name>substrate</name>
    </ligand>
</feature>
<feature type="binding site" evidence="1">
    <location>
        <position position="259"/>
    </location>
    <ligand>
        <name>ATP</name>
        <dbReference type="ChEBI" id="CHEBI:30616"/>
    </ligand>
</feature>
<feature type="binding site" evidence="1">
    <location>
        <position position="296"/>
    </location>
    <ligand>
        <name>substrate</name>
    </ligand>
</feature>
<feature type="binding site" evidence="1">
    <location>
        <position position="304"/>
    </location>
    <ligand>
        <name>ATP</name>
        <dbReference type="ChEBI" id="CHEBI:30616"/>
    </ligand>
</feature>
<feature type="binding site" evidence="1">
    <location>
        <position position="402"/>
    </location>
    <ligand>
        <name>ATP</name>
        <dbReference type="ChEBI" id="CHEBI:30616"/>
    </ligand>
</feature>
<feature type="disulfide bond" evidence="1">
    <location>
        <begin position="68"/>
        <end position="222"/>
    </location>
</feature>
<feature type="disulfide bond" evidence="1">
    <location>
        <begin position="353"/>
        <end position="370"/>
    </location>
</feature>
<feature type="disulfide bond" evidence="1">
    <location>
        <begin position="413"/>
        <end position="417"/>
    </location>
</feature>
<sequence length="489" mass="54539">MTFRHCVAVDLGASSGRVMLARYDSKHRTLTLREIHRFVNCLQKTDGFDTWDIDSLEKDIRLGLKKVCNEGILIDSIGIDTWGVDYVLLDKQGQRVGLPVSYRDNRTTGIMPQALVQIGKSEIYRRSGIQFLPFNTIYQLRALTKQQPELTAQVAHALLMPDYFSYRLTGEMNWEYTNATTTQLVNINTDDWDDTLLAWTGAKKSWFGRPSHPGNVIGDWICPQGNRIPVVAVASHDTASAVIASPLANKHSAYLSSGTWSLMGFESKKPYTTDEALAANITNEGGAEGRYRVLKNIMGLWLLQRVLKERRITDLPALIAQTEALPACRFLINPNDDRFINPDDMHAEIQAACRETDQPVPVSDAELARCIFDSLALLYADILHELANLRGEKFTQLHIVGGGCQNALLNQLCADACGIRVMAGPVEASTLGNIGIQLMTLDELNNIDDFRQVVSANYDLTTYIPNPDSEIARHVAQFQPKRQTKELCA</sequence>
<organism>
    <name type="scientific">Salmonella paratyphi A (strain AKU_12601)</name>
    <dbReference type="NCBI Taxonomy" id="554290"/>
    <lineage>
        <taxon>Bacteria</taxon>
        <taxon>Pseudomonadati</taxon>
        <taxon>Pseudomonadota</taxon>
        <taxon>Gammaproteobacteria</taxon>
        <taxon>Enterobacterales</taxon>
        <taxon>Enterobacteriaceae</taxon>
        <taxon>Salmonella</taxon>
    </lineage>
</organism>
<reference key="1">
    <citation type="journal article" date="2009" name="BMC Genomics">
        <title>Pseudogene accumulation in the evolutionary histories of Salmonella enterica serovars Paratyphi A and Typhi.</title>
        <authorList>
            <person name="Holt K.E."/>
            <person name="Thomson N.R."/>
            <person name="Wain J."/>
            <person name="Langridge G.C."/>
            <person name="Hasan R."/>
            <person name="Bhutta Z.A."/>
            <person name="Quail M.A."/>
            <person name="Norbertczak H."/>
            <person name="Walker D."/>
            <person name="Simmonds M."/>
            <person name="White B."/>
            <person name="Bason N."/>
            <person name="Mungall K."/>
            <person name="Dougan G."/>
            <person name="Parkhill J."/>
        </authorList>
    </citation>
    <scope>NUCLEOTIDE SEQUENCE [LARGE SCALE GENOMIC DNA]</scope>
    <source>
        <strain>AKU_12601</strain>
    </source>
</reference>
<protein>
    <recommendedName>
        <fullName evidence="1">Rhamnulokinase</fullName>
        <shortName evidence="1">RhaB</shortName>
        <ecNumber evidence="1">2.7.1.5</ecNumber>
    </recommendedName>
    <alternativeName>
        <fullName evidence="1">ATP:L-rhamnulose phosphotransferase</fullName>
    </alternativeName>
    <alternativeName>
        <fullName evidence="1">L-rhamnulose 1-kinase</fullName>
    </alternativeName>
    <alternativeName>
        <fullName evidence="1">Rhamnulose kinase</fullName>
    </alternativeName>
</protein>
<keyword id="KW-0067">ATP-binding</keyword>
<keyword id="KW-1015">Disulfide bond</keyword>
<keyword id="KW-0418">Kinase</keyword>
<keyword id="KW-0460">Magnesium</keyword>
<keyword id="KW-0547">Nucleotide-binding</keyword>
<keyword id="KW-0684">Rhamnose metabolism</keyword>
<keyword id="KW-0808">Transferase</keyword>
<accession>B5BJG7</accession>
<comment type="function">
    <text evidence="1">Involved in the catabolism of L-rhamnose (6-deoxy-L-mannose). Catalyzes the transfer of the gamma-phosphate group from ATP to the 1-hydroxyl group of L-rhamnulose to yield L-rhamnulose 1-phosphate.</text>
</comment>
<comment type="catalytic activity">
    <reaction evidence="1">
        <text>L-rhamnulose + ATP = L-rhamnulose 1-phosphate + ADP + H(+)</text>
        <dbReference type="Rhea" id="RHEA:20117"/>
        <dbReference type="ChEBI" id="CHEBI:15378"/>
        <dbReference type="ChEBI" id="CHEBI:17897"/>
        <dbReference type="ChEBI" id="CHEBI:30616"/>
        <dbReference type="ChEBI" id="CHEBI:58313"/>
        <dbReference type="ChEBI" id="CHEBI:456216"/>
        <dbReference type="EC" id="2.7.1.5"/>
    </reaction>
</comment>
<comment type="cofactor">
    <cofactor evidence="1">
        <name>Mg(2+)</name>
        <dbReference type="ChEBI" id="CHEBI:18420"/>
    </cofactor>
</comment>
<comment type="pathway">
    <text evidence="1">Carbohydrate degradation; L-rhamnose degradation; glycerone phosphate from L-rhamnose: step 2/3.</text>
</comment>
<comment type="similarity">
    <text evidence="1">Belongs to the rhamnulokinase family.</text>
</comment>
<dbReference type="EC" id="2.7.1.5" evidence="1"/>
<dbReference type="EMBL" id="FM200053">
    <property type="protein sequence ID" value="CAR61900.1"/>
    <property type="molecule type" value="Genomic_DNA"/>
</dbReference>
<dbReference type="RefSeq" id="WP_000143956.1">
    <property type="nucleotide sequence ID" value="NC_011147.1"/>
</dbReference>
<dbReference type="SMR" id="B5BJG7"/>
<dbReference type="KEGG" id="sek:SSPA3618"/>
<dbReference type="HOGENOM" id="CLU_039395_0_0_6"/>
<dbReference type="UniPathway" id="UPA00541">
    <property type="reaction ID" value="UER00602"/>
</dbReference>
<dbReference type="Proteomes" id="UP000001869">
    <property type="component" value="Chromosome"/>
</dbReference>
<dbReference type="GO" id="GO:0005829">
    <property type="term" value="C:cytosol"/>
    <property type="evidence" value="ECO:0007669"/>
    <property type="project" value="TreeGrafter"/>
</dbReference>
<dbReference type="GO" id="GO:0005524">
    <property type="term" value="F:ATP binding"/>
    <property type="evidence" value="ECO:0007669"/>
    <property type="project" value="UniProtKB-KW"/>
</dbReference>
<dbReference type="GO" id="GO:0004370">
    <property type="term" value="F:glycerol kinase activity"/>
    <property type="evidence" value="ECO:0007669"/>
    <property type="project" value="TreeGrafter"/>
</dbReference>
<dbReference type="GO" id="GO:0008993">
    <property type="term" value="F:rhamnulokinase activity"/>
    <property type="evidence" value="ECO:0007669"/>
    <property type="project" value="UniProtKB-UniRule"/>
</dbReference>
<dbReference type="GO" id="GO:0006071">
    <property type="term" value="P:glycerol metabolic process"/>
    <property type="evidence" value="ECO:0007669"/>
    <property type="project" value="TreeGrafter"/>
</dbReference>
<dbReference type="GO" id="GO:0019301">
    <property type="term" value="P:rhamnose catabolic process"/>
    <property type="evidence" value="ECO:0007669"/>
    <property type="project" value="UniProtKB-UniRule"/>
</dbReference>
<dbReference type="CDD" id="cd07771">
    <property type="entry name" value="ASKHA_NBD_FGGY_RhaB-like"/>
    <property type="match status" value="1"/>
</dbReference>
<dbReference type="FunFam" id="3.30.420.40:FF:000064">
    <property type="entry name" value="Rhamnulokinase"/>
    <property type="match status" value="1"/>
</dbReference>
<dbReference type="FunFam" id="3.30.420.40:FF:000073">
    <property type="entry name" value="Rhamnulokinase"/>
    <property type="match status" value="1"/>
</dbReference>
<dbReference type="Gene3D" id="3.30.420.40">
    <property type="match status" value="2"/>
</dbReference>
<dbReference type="HAMAP" id="MF_01535">
    <property type="entry name" value="Rhamnulokinase"/>
    <property type="match status" value="1"/>
</dbReference>
<dbReference type="InterPro" id="IPR043129">
    <property type="entry name" value="ATPase_NBD"/>
</dbReference>
<dbReference type="InterPro" id="IPR018485">
    <property type="entry name" value="FGGY_C"/>
</dbReference>
<dbReference type="InterPro" id="IPR018484">
    <property type="entry name" value="FGGY_N"/>
</dbReference>
<dbReference type="InterPro" id="IPR013449">
    <property type="entry name" value="Rhamnulokinase"/>
</dbReference>
<dbReference type="NCBIfam" id="NF007925">
    <property type="entry name" value="PRK10640.1"/>
    <property type="match status" value="1"/>
</dbReference>
<dbReference type="NCBIfam" id="TIGR02627">
    <property type="entry name" value="rhamnulo_kin"/>
    <property type="match status" value="1"/>
</dbReference>
<dbReference type="PANTHER" id="PTHR10196:SF93">
    <property type="entry name" value="L-RHAMNULOKINASE"/>
    <property type="match status" value="1"/>
</dbReference>
<dbReference type="PANTHER" id="PTHR10196">
    <property type="entry name" value="SUGAR KINASE"/>
    <property type="match status" value="1"/>
</dbReference>
<dbReference type="Pfam" id="PF02782">
    <property type="entry name" value="FGGY_C"/>
    <property type="match status" value="1"/>
</dbReference>
<dbReference type="Pfam" id="PF00370">
    <property type="entry name" value="FGGY_N"/>
    <property type="match status" value="1"/>
</dbReference>
<dbReference type="SUPFAM" id="SSF53067">
    <property type="entry name" value="Actin-like ATPase domain"/>
    <property type="match status" value="2"/>
</dbReference>
<evidence type="ECO:0000255" key="1">
    <source>
        <dbReference type="HAMAP-Rule" id="MF_01535"/>
    </source>
</evidence>
<proteinExistence type="inferred from homology"/>
<gene>
    <name evidence="1" type="primary">rhaB</name>
    <name type="ordered locus">SSPA3618</name>
</gene>